<protein>
    <recommendedName>
        <fullName evidence="1">Ribosomal RNA small subunit methyltransferase G</fullName>
        <ecNumber evidence="1">2.1.1.170</ecNumber>
    </recommendedName>
    <alternativeName>
        <fullName evidence="1">16S rRNA 7-methylguanosine methyltransferase</fullName>
        <shortName evidence="1">16S rRNA m7G methyltransferase</shortName>
    </alternativeName>
</protein>
<comment type="function">
    <text evidence="1">Specifically methylates the N7 position of guanine in position 527 of 16S rRNA.</text>
</comment>
<comment type="catalytic activity">
    <reaction evidence="1">
        <text>guanosine(527) in 16S rRNA + S-adenosyl-L-methionine = N(7)-methylguanosine(527) in 16S rRNA + S-adenosyl-L-homocysteine</text>
        <dbReference type="Rhea" id="RHEA:42732"/>
        <dbReference type="Rhea" id="RHEA-COMP:10209"/>
        <dbReference type="Rhea" id="RHEA-COMP:10210"/>
        <dbReference type="ChEBI" id="CHEBI:57856"/>
        <dbReference type="ChEBI" id="CHEBI:59789"/>
        <dbReference type="ChEBI" id="CHEBI:74269"/>
        <dbReference type="ChEBI" id="CHEBI:74480"/>
        <dbReference type="EC" id="2.1.1.170"/>
    </reaction>
</comment>
<comment type="subcellular location">
    <subcellularLocation>
        <location evidence="1">Cytoplasm</location>
    </subcellularLocation>
</comment>
<comment type="similarity">
    <text evidence="1">Belongs to the methyltransferase superfamily. RNA methyltransferase RsmG family.</text>
</comment>
<organism>
    <name type="scientific">Escherichia coli O7:K1 (strain IAI39 / ExPEC)</name>
    <dbReference type="NCBI Taxonomy" id="585057"/>
    <lineage>
        <taxon>Bacteria</taxon>
        <taxon>Pseudomonadati</taxon>
        <taxon>Pseudomonadota</taxon>
        <taxon>Gammaproteobacteria</taxon>
        <taxon>Enterobacterales</taxon>
        <taxon>Enterobacteriaceae</taxon>
        <taxon>Escherichia</taxon>
    </lineage>
</organism>
<feature type="chain" id="PRO_1000117067" description="Ribosomal RNA small subunit methyltransferase G">
    <location>
        <begin position="1"/>
        <end position="207"/>
    </location>
</feature>
<feature type="binding site" evidence="1">
    <location>
        <position position="73"/>
    </location>
    <ligand>
        <name>S-adenosyl-L-methionine</name>
        <dbReference type="ChEBI" id="CHEBI:59789"/>
    </ligand>
</feature>
<feature type="binding site" evidence="1">
    <location>
        <position position="78"/>
    </location>
    <ligand>
        <name>S-adenosyl-L-methionine</name>
        <dbReference type="ChEBI" id="CHEBI:59789"/>
    </ligand>
</feature>
<feature type="binding site" evidence="1">
    <location>
        <begin position="124"/>
        <end position="125"/>
    </location>
    <ligand>
        <name>S-adenosyl-L-methionine</name>
        <dbReference type="ChEBI" id="CHEBI:59789"/>
    </ligand>
</feature>
<feature type="binding site" evidence="1">
    <location>
        <position position="139"/>
    </location>
    <ligand>
        <name>S-adenosyl-L-methionine</name>
        <dbReference type="ChEBI" id="CHEBI:59789"/>
    </ligand>
</feature>
<name>RSMG_ECO7I</name>
<sequence length="207" mass="23472">MLNKLSLLLKDAGISLTDHQKNQLIAYVNMLHKWNKAYNLTSVRDPNEMLVRHILDSIVVAPYLQGERFIDVGTGPGLPGIPLSIVRPEAHFTLLDSLGKRVRFLRQVQHELKLENIEPVQSRVEEFPSEPPFDGVISRAFASLNDMVSWCHHLPGEQGRFYALKGQMPEDEIALLPEEYQVESVVKLHVPALDGERHLVMIKANKI</sequence>
<accession>B7NR42</accession>
<proteinExistence type="inferred from homology"/>
<gene>
    <name evidence="1" type="primary">rsmG</name>
    <name type="ordered locus">ECIAI39_4344</name>
</gene>
<keyword id="KW-0963">Cytoplasm</keyword>
<keyword id="KW-0489">Methyltransferase</keyword>
<keyword id="KW-0698">rRNA processing</keyword>
<keyword id="KW-0949">S-adenosyl-L-methionine</keyword>
<keyword id="KW-0808">Transferase</keyword>
<dbReference type="EC" id="2.1.1.170" evidence="1"/>
<dbReference type="EMBL" id="CU928164">
    <property type="protein sequence ID" value="CAR20450.1"/>
    <property type="molecule type" value="Genomic_DNA"/>
</dbReference>
<dbReference type="RefSeq" id="WP_000932838.1">
    <property type="nucleotide sequence ID" value="NC_011750.1"/>
</dbReference>
<dbReference type="RefSeq" id="YP_002410219.1">
    <property type="nucleotide sequence ID" value="NC_011750.1"/>
</dbReference>
<dbReference type="SMR" id="B7NR42"/>
<dbReference type="STRING" id="585057.ECIAI39_4344"/>
<dbReference type="KEGG" id="ect:ECIAI39_4344"/>
<dbReference type="PATRIC" id="fig|585057.6.peg.4490"/>
<dbReference type="HOGENOM" id="CLU_065341_2_2_6"/>
<dbReference type="Proteomes" id="UP000000749">
    <property type="component" value="Chromosome"/>
</dbReference>
<dbReference type="GO" id="GO:0005829">
    <property type="term" value="C:cytosol"/>
    <property type="evidence" value="ECO:0007669"/>
    <property type="project" value="TreeGrafter"/>
</dbReference>
<dbReference type="GO" id="GO:0070043">
    <property type="term" value="F:rRNA (guanine-N7-)-methyltransferase activity"/>
    <property type="evidence" value="ECO:0007669"/>
    <property type="project" value="UniProtKB-UniRule"/>
</dbReference>
<dbReference type="CDD" id="cd02440">
    <property type="entry name" value="AdoMet_MTases"/>
    <property type="match status" value="1"/>
</dbReference>
<dbReference type="FunFam" id="3.40.50.150:FF:000032">
    <property type="entry name" value="Ribosomal RNA small subunit methyltransferase G"/>
    <property type="match status" value="1"/>
</dbReference>
<dbReference type="Gene3D" id="3.40.50.150">
    <property type="entry name" value="Vaccinia Virus protein VP39"/>
    <property type="match status" value="1"/>
</dbReference>
<dbReference type="HAMAP" id="MF_00074">
    <property type="entry name" value="16SrRNA_methyltr_G"/>
    <property type="match status" value="1"/>
</dbReference>
<dbReference type="InterPro" id="IPR003682">
    <property type="entry name" value="rRNA_ssu_MeTfrase_G"/>
</dbReference>
<dbReference type="InterPro" id="IPR029063">
    <property type="entry name" value="SAM-dependent_MTases_sf"/>
</dbReference>
<dbReference type="NCBIfam" id="TIGR00138">
    <property type="entry name" value="rsmG_gidB"/>
    <property type="match status" value="1"/>
</dbReference>
<dbReference type="PANTHER" id="PTHR31760">
    <property type="entry name" value="S-ADENOSYL-L-METHIONINE-DEPENDENT METHYLTRANSFERASES SUPERFAMILY PROTEIN"/>
    <property type="match status" value="1"/>
</dbReference>
<dbReference type="PANTHER" id="PTHR31760:SF0">
    <property type="entry name" value="S-ADENOSYL-L-METHIONINE-DEPENDENT METHYLTRANSFERASES SUPERFAMILY PROTEIN"/>
    <property type="match status" value="1"/>
</dbReference>
<dbReference type="Pfam" id="PF02527">
    <property type="entry name" value="GidB"/>
    <property type="match status" value="1"/>
</dbReference>
<dbReference type="PIRSF" id="PIRSF003078">
    <property type="entry name" value="GidB"/>
    <property type="match status" value="1"/>
</dbReference>
<dbReference type="SUPFAM" id="SSF53335">
    <property type="entry name" value="S-adenosyl-L-methionine-dependent methyltransferases"/>
    <property type="match status" value="1"/>
</dbReference>
<evidence type="ECO:0000255" key="1">
    <source>
        <dbReference type="HAMAP-Rule" id="MF_00074"/>
    </source>
</evidence>
<reference key="1">
    <citation type="journal article" date="2009" name="PLoS Genet.">
        <title>Organised genome dynamics in the Escherichia coli species results in highly diverse adaptive paths.</title>
        <authorList>
            <person name="Touchon M."/>
            <person name="Hoede C."/>
            <person name="Tenaillon O."/>
            <person name="Barbe V."/>
            <person name="Baeriswyl S."/>
            <person name="Bidet P."/>
            <person name="Bingen E."/>
            <person name="Bonacorsi S."/>
            <person name="Bouchier C."/>
            <person name="Bouvet O."/>
            <person name="Calteau A."/>
            <person name="Chiapello H."/>
            <person name="Clermont O."/>
            <person name="Cruveiller S."/>
            <person name="Danchin A."/>
            <person name="Diard M."/>
            <person name="Dossat C."/>
            <person name="Karoui M.E."/>
            <person name="Frapy E."/>
            <person name="Garry L."/>
            <person name="Ghigo J.M."/>
            <person name="Gilles A.M."/>
            <person name="Johnson J."/>
            <person name="Le Bouguenec C."/>
            <person name="Lescat M."/>
            <person name="Mangenot S."/>
            <person name="Martinez-Jehanne V."/>
            <person name="Matic I."/>
            <person name="Nassif X."/>
            <person name="Oztas S."/>
            <person name="Petit M.A."/>
            <person name="Pichon C."/>
            <person name="Rouy Z."/>
            <person name="Ruf C.S."/>
            <person name="Schneider D."/>
            <person name="Tourret J."/>
            <person name="Vacherie B."/>
            <person name="Vallenet D."/>
            <person name="Medigue C."/>
            <person name="Rocha E.P.C."/>
            <person name="Denamur E."/>
        </authorList>
    </citation>
    <scope>NUCLEOTIDE SEQUENCE [LARGE SCALE GENOMIC DNA]</scope>
    <source>
        <strain>IAI39 / ExPEC</strain>
    </source>
</reference>